<gene>
    <name evidence="1" type="primary">cysS</name>
    <name type="ordered locus">SMU_158</name>
</gene>
<proteinExistence type="inferred from homology"/>
<name>SYC_STRMU</name>
<sequence>MIKIYDTLTRSLREFVPIHENTVNMYVCGPTVYNYIHVGNGRSAIAFDTIRRYFEYRGYTVNYISNFTDVDDKIIKAAAKAGMTTKALSDKFIAAFKEDVAALGVKPATENPRVIDYMQDIIDFVQILVDKGFAYESSGDVYFRVRKSDNYAALANKTLEELEIGASGRVDAESDCKEDPLDFALWKAAKEGEIAWDSPWGAGRPGWHIECSVMATTILGDTIDIHGGGADLEFPHHTNEIAQSEAKTGKKFANYWMHNGFVNIDNEKMSKSLGNFITVHDALKTMDGQVLRFFFATQHYRKPFNFTEKAIRDAEINLKYLKNTYEQPFTATVDEAVFARFLEKFQAAMDEDFNTANGITVVFELAKWINSGHYDQTVKDKFAEILQIFGVVFKEEVLDAEIEKLIEERQKARAARDFTKADAIRDDLAAQGIKLLDTKDGVRWMRD</sequence>
<organism>
    <name type="scientific">Streptococcus mutans serotype c (strain ATCC 700610 / UA159)</name>
    <dbReference type="NCBI Taxonomy" id="210007"/>
    <lineage>
        <taxon>Bacteria</taxon>
        <taxon>Bacillati</taxon>
        <taxon>Bacillota</taxon>
        <taxon>Bacilli</taxon>
        <taxon>Lactobacillales</taxon>
        <taxon>Streptococcaceae</taxon>
        <taxon>Streptococcus</taxon>
    </lineage>
</organism>
<keyword id="KW-0030">Aminoacyl-tRNA synthetase</keyword>
<keyword id="KW-0067">ATP-binding</keyword>
<keyword id="KW-0963">Cytoplasm</keyword>
<keyword id="KW-0436">Ligase</keyword>
<keyword id="KW-0479">Metal-binding</keyword>
<keyword id="KW-0547">Nucleotide-binding</keyword>
<keyword id="KW-0648">Protein biosynthesis</keyword>
<keyword id="KW-1185">Reference proteome</keyword>
<keyword id="KW-0862">Zinc</keyword>
<accession>Q8DWA9</accession>
<protein>
    <recommendedName>
        <fullName evidence="1">Cysteine--tRNA ligase</fullName>
        <ecNumber evidence="1">6.1.1.16</ecNumber>
    </recommendedName>
    <alternativeName>
        <fullName evidence="1">Cysteinyl-tRNA synthetase</fullName>
        <shortName evidence="1">CysRS</shortName>
    </alternativeName>
</protein>
<evidence type="ECO:0000255" key="1">
    <source>
        <dbReference type="HAMAP-Rule" id="MF_00041"/>
    </source>
</evidence>
<comment type="catalytic activity">
    <reaction evidence="1">
        <text>tRNA(Cys) + L-cysteine + ATP = L-cysteinyl-tRNA(Cys) + AMP + diphosphate</text>
        <dbReference type="Rhea" id="RHEA:17773"/>
        <dbReference type="Rhea" id="RHEA-COMP:9661"/>
        <dbReference type="Rhea" id="RHEA-COMP:9679"/>
        <dbReference type="ChEBI" id="CHEBI:30616"/>
        <dbReference type="ChEBI" id="CHEBI:33019"/>
        <dbReference type="ChEBI" id="CHEBI:35235"/>
        <dbReference type="ChEBI" id="CHEBI:78442"/>
        <dbReference type="ChEBI" id="CHEBI:78517"/>
        <dbReference type="ChEBI" id="CHEBI:456215"/>
        <dbReference type="EC" id="6.1.1.16"/>
    </reaction>
</comment>
<comment type="cofactor">
    <cofactor evidence="1">
        <name>Zn(2+)</name>
        <dbReference type="ChEBI" id="CHEBI:29105"/>
    </cofactor>
    <text evidence="1">Binds 1 zinc ion per subunit.</text>
</comment>
<comment type="subunit">
    <text evidence="1">Monomer.</text>
</comment>
<comment type="subcellular location">
    <subcellularLocation>
        <location evidence="1">Cytoplasm</location>
    </subcellularLocation>
</comment>
<comment type="similarity">
    <text evidence="1">Belongs to the class-I aminoacyl-tRNA synthetase family.</text>
</comment>
<reference key="1">
    <citation type="journal article" date="2002" name="Proc. Natl. Acad. Sci. U.S.A.">
        <title>Genome sequence of Streptococcus mutans UA159, a cariogenic dental pathogen.</title>
        <authorList>
            <person name="Ajdic D.J."/>
            <person name="McShan W.M."/>
            <person name="McLaughlin R.E."/>
            <person name="Savic G."/>
            <person name="Chang J."/>
            <person name="Carson M.B."/>
            <person name="Primeaux C."/>
            <person name="Tian R."/>
            <person name="Kenton S."/>
            <person name="Jia H.G."/>
            <person name="Lin S.P."/>
            <person name="Qian Y."/>
            <person name="Li S."/>
            <person name="Zhu H."/>
            <person name="Najar F.Z."/>
            <person name="Lai H."/>
            <person name="White J."/>
            <person name="Roe B.A."/>
            <person name="Ferretti J.J."/>
        </authorList>
    </citation>
    <scope>NUCLEOTIDE SEQUENCE [LARGE SCALE GENOMIC DNA]</scope>
    <source>
        <strain>ATCC 700610 / UA159</strain>
    </source>
</reference>
<feature type="chain" id="PRO_0000159492" description="Cysteine--tRNA ligase">
    <location>
        <begin position="1"/>
        <end position="447"/>
    </location>
</feature>
<feature type="short sequence motif" description="'HIGH' region">
    <location>
        <begin position="30"/>
        <end position="40"/>
    </location>
</feature>
<feature type="short sequence motif" description="'KMSKS' region">
    <location>
        <begin position="268"/>
        <end position="272"/>
    </location>
</feature>
<feature type="binding site" evidence="1">
    <location>
        <position position="28"/>
    </location>
    <ligand>
        <name>Zn(2+)</name>
        <dbReference type="ChEBI" id="CHEBI:29105"/>
    </ligand>
</feature>
<feature type="binding site" evidence="1">
    <location>
        <position position="211"/>
    </location>
    <ligand>
        <name>Zn(2+)</name>
        <dbReference type="ChEBI" id="CHEBI:29105"/>
    </ligand>
</feature>
<feature type="binding site" evidence="1">
    <location>
        <position position="236"/>
    </location>
    <ligand>
        <name>Zn(2+)</name>
        <dbReference type="ChEBI" id="CHEBI:29105"/>
    </ligand>
</feature>
<feature type="binding site" evidence="1">
    <location>
        <position position="240"/>
    </location>
    <ligand>
        <name>Zn(2+)</name>
        <dbReference type="ChEBI" id="CHEBI:29105"/>
    </ligand>
</feature>
<feature type="binding site" evidence="1">
    <location>
        <position position="271"/>
    </location>
    <ligand>
        <name>ATP</name>
        <dbReference type="ChEBI" id="CHEBI:30616"/>
    </ligand>
</feature>
<dbReference type="EC" id="6.1.1.16" evidence="1"/>
<dbReference type="EMBL" id="AE014133">
    <property type="protein sequence ID" value="AAN57934.1"/>
    <property type="molecule type" value="Genomic_DNA"/>
</dbReference>
<dbReference type="RefSeq" id="NP_720628.1">
    <property type="nucleotide sequence ID" value="NC_004350.2"/>
</dbReference>
<dbReference type="RefSeq" id="WP_002263004.1">
    <property type="nucleotide sequence ID" value="NC_004350.2"/>
</dbReference>
<dbReference type="SMR" id="Q8DWA9"/>
<dbReference type="STRING" id="210007.SMU_158"/>
<dbReference type="KEGG" id="smu:SMU_158"/>
<dbReference type="PATRIC" id="fig|210007.7.peg.135"/>
<dbReference type="eggNOG" id="COG0215">
    <property type="taxonomic scope" value="Bacteria"/>
</dbReference>
<dbReference type="HOGENOM" id="CLU_013528_0_1_9"/>
<dbReference type="OrthoDB" id="9815130at2"/>
<dbReference type="PhylomeDB" id="Q8DWA9"/>
<dbReference type="Proteomes" id="UP000002512">
    <property type="component" value="Chromosome"/>
</dbReference>
<dbReference type="GO" id="GO:0005829">
    <property type="term" value="C:cytosol"/>
    <property type="evidence" value="ECO:0007669"/>
    <property type="project" value="TreeGrafter"/>
</dbReference>
<dbReference type="GO" id="GO:0005524">
    <property type="term" value="F:ATP binding"/>
    <property type="evidence" value="ECO:0007669"/>
    <property type="project" value="UniProtKB-UniRule"/>
</dbReference>
<dbReference type="GO" id="GO:0004817">
    <property type="term" value="F:cysteine-tRNA ligase activity"/>
    <property type="evidence" value="ECO:0007669"/>
    <property type="project" value="UniProtKB-UniRule"/>
</dbReference>
<dbReference type="GO" id="GO:0008270">
    <property type="term" value="F:zinc ion binding"/>
    <property type="evidence" value="ECO:0007669"/>
    <property type="project" value="UniProtKB-UniRule"/>
</dbReference>
<dbReference type="GO" id="GO:0006423">
    <property type="term" value="P:cysteinyl-tRNA aminoacylation"/>
    <property type="evidence" value="ECO:0007669"/>
    <property type="project" value="UniProtKB-UniRule"/>
</dbReference>
<dbReference type="CDD" id="cd00672">
    <property type="entry name" value="CysRS_core"/>
    <property type="match status" value="1"/>
</dbReference>
<dbReference type="FunFam" id="3.40.50.620:FF:000130">
    <property type="entry name" value="Cysteine--tRNA ligase"/>
    <property type="match status" value="1"/>
</dbReference>
<dbReference type="Gene3D" id="1.20.120.640">
    <property type="entry name" value="Anticodon-binding domain of a subclass of class I aminoacyl-tRNA synthetases"/>
    <property type="match status" value="1"/>
</dbReference>
<dbReference type="Gene3D" id="3.40.50.620">
    <property type="entry name" value="HUPs"/>
    <property type="match status" value="1"/>
</dbReference>
<dbReference type="HAMAP" id="MF_00041">
    <property type="entry name" value="Cys_tRNA_synth"/>
    <property type="match status" value="1"/>
</dbReference>
<dbReference type="InterPro" id="IPR015803">
    <property type="entry name" value="Cys-tRNA-ligase"/>
</dbReference>
<dbReference type="InterPro" id="IPR015273">
    <property type="entry name" value="Cys-tRNA-synt_Ia_DALR"/>
</dbReference>
<dbReference type="InterPro" id="IPR024909">
    <property type="entry name" value="Cys-tRNA/MSH_ligase"/>
</dbReference>
<dbReference type="InterPro" id="IPR056411">
    <property type="entry name" value="CysS_C"/>
</dbReference>
<dbReference type="InterPro" id="IPR014729">
    <property type="entry name" value="Rossmann-like_a/b/a_fold"/>
</dbReference>
<dbReference type="InterPro" id="IPR032678">
    <property type="entry name" value="tRNA-synt_1_cat_dom"/>
</dbReference>
<dbReference type="InterPro" id="IPR009080">
    <property type="entry name" value="tRNAsynth_Ia_anticodon-bd"/>
</dbReference>
<dbReference type="NCBIfam" id="TIGR00435">
    <property type="entry name" value="cysS"/>
    <property type="match status" value="1"/>
</dbReference>
<dbReference type="PANTHER" id="PTHR10890:SF3">
    <property type="entry name" value="CYSTEINE--TRNA LIGASE, CYTOPLASMIC"/>
    <property type="match status" value="1"/>
</dbReference>
<dbReference type="PANTHER" id="PTHR10890">
    <property type="entry name" value="CYSTEINYL-TRNA SYNTHETASE"/>
    <property type="match status" value="1"/>
</dbReference>
<dbReference type="Pfam" id="PF23493">
    <property type="entry name" value="CysS_C"/>
    <property type="match status" value="1"/>
</dbReference>
<dbReference type="Pfam" id="PF09190">
    <property type="entry name" value="DALR_2"/>
    <property type="match status" value="1"/>
</dbReference>
<dbReference type="Pfam" id="PF01406">
    <property type="entry name" value="tRNA-synt_1e"/>
    <property type="match status" value="1"/>
</dbReference>
<dbReference type="PRINTS" id="PR00983">
    <property type="entry name" value="TRNASYNTHCYS"/>
</dbReference>
<dbReference type="SMART" id="SM00840">
    <property type="entry name" value="DALR_2"/>
    <property type="match status" value="1"/>
</dbReference>
<dbReference type="SUPFAM" id="SSF47323">
    <property type="entry name" value="Anticodon-binding domain of a subclass of class I aminoacyl-tRNA synthetases"/>
    <property type="match status" value="1"/>
</dbReference>
<dbReference type="SUPFAM" id="SSF52374">
    <property type="entry name" value="Nucleotidylyl transferase"/>
    <property type="match status" value="1"/>
</dbReference>